<protein>
    <recommendedName>
        <fullName>Anthranilate synthase component 1</fullName>
        <shortName>AS</shortName>
        <shortName>ASI</shortName>
        <ecNumber>4.1.3.27</ecNumber>
    </recommendedName>
</protein>
<keyword id="KW-0028">Amino-acid biosynthesis</keyword>
<keyword id="KW-0057">Aromatic amino acid biosynthesis</keyword>
<keyword id="KW-0456">Lyase</keyword>
<keyword id="KW-0460">Magnesium</keyword>
<keyword id="KW-0479">Metal-binding</keyword>
<keyword id="KW-0822">Tryptophan biosynthesis</keyword>
<gene>
    <name type="primary">trpE</name>
</gene>
<accession>P23315</accession>
<dbReference type="EC" id="4.1.3.27"/>
<dbReference type="EMBL" id="X51633">
    <property type="protein sequence ID" value="CAA35960.1"/>
    <property type="molecule type" value="Genomic_DNA"/>
</dbReference>
<dbReference type="PIR" id="S11891">
    <property type="entry name" value="S11891"/>
</dbReference>
<dbReference type="SMR" id="P23315"/>
<dbReference type="STRING" id="471.BUM88_01275"/>
<dbReference type="UniPathway" id="UPA00035">
    <property type="reaction ID" value="UER00040"/>
</dbReference>
<dbReference type="GO" id="GO:0004049">
    <property type="term" value="F:anthranilate synthase activity"/>
    <property type="evidence" value="ECO:0007669"/>
    <property type="project" value="UniProtKB-EC"/>
</dbReference>
<dbReference type="GO" id="GO:0046872">
    <property type="term" value="F:metal ion binding"/>
    <property type="evidence" value="ECO:0007669"/>
    <property type="project" value="UniProtKB-KW"/>
</dbReference>
<dbReference type="GO" id="GO:0000162">
    <property type="term" value="P:L-tryptophan biosynthetic process"/>
    <property type="evidence" value="ECO:0007669"/>
    <property type="project" value="UniProtKB-UniPathway"/>
</dbReference>
<dbReference type="Gene3D" id="3.60.120.10">
    <property type="entry name" value="Anthranilate synthase"/>
    <property type="match status" value="1"/>
</dbReference>
<dbReference type="InterPro" id="IPR005801">
    <property type="entry name" value="ADC_synthase"/>
</dbReference>
<dbReference type="InterPro" id="IPR019999">
    <property type="entry name" value="Anth_synth_I-like"/>
</dbReference>
<dbReference type="InterPro" id="IPR006805">
    <property type="entry name" value="Anth_synth_I_N"/>
</dbReference>
<dbReference type="InterPro" id="IPR005256">
    <property type="entry name" value="Anth_synth_I_PabB"/>
</dbReference>
<dbReference type="InterPro" id="IPR015890">
    <property type="entry name" value="Chorismate_C"/>
</dbReference>
<dbReference type="NCBIfam" id="TIGR00564">
    <property type="entry name" value="trpE_most"/>
    <property type="match status" value="1"/>
</dbReference>
<dbReference type="PANTHER" id="PTHR11236">
    <property type="entry name" value="AMINOBENZOATE/ANTHRANILATE SYNTHASE"/>
    <property type="match status" value="1"/>
</dbReference>
<dbReference type="PANTHER" id="PTHR11236:SF48">
    <property type="entry name" value="ISOCHORISMATE SYNTHASE MENF"/>
    <property type="match status" value="1"/>
</dbReference>
<dbReference type="Pfam" id="PF04715">
    <property type="entry name" value="Anth_synt_I_N"/>
    <property type="match status" value="1"/>
</dbReference>
<dbReference type="Pfam" id="PF00425">
    <property type="entry name" value="Chorismate_bind"/>
    <property type="match status" value="1"/>
</dbReference>
<dbReference type="PRINTS" id="PR00095">
    <property type="entry name" value="ANTSNTHASEI"/>
</dbReference>
<dbReference type="SUPFAM" id="SSF56322">
    <property type="entry name" value="ADC synthase"/>
    <property type="match status" value="1"/>
</dbReference>
<reference key="1">
    <citation type="journal article" date="1990" name="Mol. Gen. Genet.">
        <title>Identification and nucleotide sequence of the Acinetobacter calcoaceticus encoded trpE gene.</title>
        <authorList>
            <person name="Haspel G."/>
            <person name="Hunger M."/>
            <person name="Schmucker R."/>
            <person name="Hillen W."/>
        </authorList>
    </citation>
    <scope>NUCLEOTIDE SEQUENCE [GENOMIC DNA]</scope>
</reference>
<proteinExistence type="inferred from homology"/>
<feature type="chain" id="PRO_0000154073" description="Anthranilate synthase component 1">
    <location>
        <begin position="1"/>
        <end position="497"/>
    </location>
</feature>
<feature type="binding site" evidence="2">
    <location>
        <position position="49"/>
    </location>
    <ligand>
        <name>L-tryptophan</name>
        <dbReference type="ChEBI" id="CHEBI:57912"/>
    </ligand>
</feature>
<feature type="binding site" evidence="2">
    <location>
        <begin position="271"/>
        <end position="273"/>
    </location>
    <ligand>
        <name>L-tryptophan</name>
        <dbReference type="ChEBI" id="CHEBI:57912"/>
    </ligand>
</feature>
<feature type="binding site" evidence="2">
    <location>
        <begin position="312"/>
        <end position="313"/>
    </location>
    <ligand>
        <name>chorismate</name>
        <dbReference type="ChEBI" id="CHEBI:29748"/>
    </ligand>
</feature>
<feature type="binding site" evidence="2">
    <location>
        <position position="339"/>
    </location>
    <ligand>
        <name>Mg(2+)</name>
        <dbReference type="ChEBI" id="CHEBI:18420"/>
    </ligand>
</feature>
<feature type="binding site" evidence="2">
    <location>
        <position position="447"/>
    </location>
    <ligand>
        <name>chorismate</name>
        <dbReference type="ChEBI" id="CHEBI:29748"/>
    </ligand>
</feature>
<feature type="binding site" evidence="2">
    <location>
        <begin position="461"/>
        <end position="463"/>
    </location>
    <ligand>
        <name>chorismate</name>
        <dbReference type="ChEBI" id="CHEBI:29748"/>
    </ligand>
</feature>
<feature type="binding site" evidence="2">
    <location>
        <position position="463"/>
    </location>
    <ligand>
        <name>chorismate</name>
        <dbReference type="ChEBI" id="CHEBI:29748"/>
    </ligand>
</feature>
<feature type="binding site" evidence="2">
    <location>
        <position position="476"/>
    </location>
    <ligand>
        <name>Mg(2+)</name>
        <dbReference type="ChEBI" id="CHEBI:18420"/>
    </ligand>
</feature>
<sequence length="497" mass="55386">MTSLTQFEQLKTAGYNTIPVYRQRLADTDTPLSVFARLKDYTQAYLFESVEGGENWARYSIIGLGESTVFSCNAGQLTIKNAQGNITTQSCADPFQYIRDYQSQFKVPPHALIPDLPQFTGGLVGYFGYDAVRYIEPRLSNVPEADPVGLPDIWMMLSKTVIIFDNLKDTLFLIVHANTTDEEAYQRAQNQLDYLERLLATPVSLQAKKHKAPHFESLTGKEKFLESVETVKEYIRAGDVMQVVPGHRMVSDFDGDPLQVYRALRHLNPSPYLFLVQGHTLTDNTPFHIVGSSPEILSRLEDGIATVRPLAGTRPRGKTKEEDLALEQELLADEKEIAEHLMLIDLGRNDVGRVSKIGKVQVTDRMVIERYSHVMHIVSNVQGEVRDDIDALDVFKATFPAGTLSGAPKIRAMEIIDEVEPVKRGIFGGAVGYLGWHGEMDMSIAIRTCVIRENKVYVQAGAGLVADSNPESEWNETQIKARAVIKAVELSSNGLIL</sequence>
<name>TRPE_ACICA</name>
<organism>
    <name type="scientific">Acinetobacter calcoaceticus</name>
    <dbReference type="NCBI Taxonomy" id="471"/>
    <lineage>
        <taxon>Bacteria</taxon>
        <taxon>Pseudomonadati</taxon>
        <taxon>Pseudomonadota</taxon>
        <taxon>Gammaproteobacteria</taxon>
        <taxon>Moraxellales</taxon>
        <taxon>Moraxellaceae</taxon>
        <taxon>Acinetobacter</taxon>
        <taxon>Acinetobacter calcoaceticus/baumannii complex</taxon>
    </lineage>
</organism>
<evidence type="ECO:0000250" key="1"/>
<evidence type="ECO:0000250" key="2">
    <source>
        <dbReference type="UniProtKB" id="P00897"/>
    </source>
</evidence>
<evidence type="ECO:0000305" key="3"/>
<comment type="function">
    <text evidence="1">Part of a heterotetrameric complex that catalyzes the two-step biosynthesis of anthranilate, an intermediate in the biosynthesis of L-tryptophan. In the first step, the glutamine-binding beta subunit (TrpG) of anthranilate synthase (AS) provides the glutamine amidotransferase activity which generates ammonia as a substrate that, along with chorismate, is used in the second step, catalyzed by the large alpha subunit of AS (TrpE) to produce anthranilate. In the absence of TrpG, TrpE can synthesize anthranilate directly from chorismate and high concentrations of ammonia (By similarity).</text>
</comment>
<comment type="catalytic activity">
    <reaction>
        <text>chorismate + L-glutamine = anthranilate + pyruvate + L-glutamate + H(+)</text>
        <dbReference type="Rhea" id="RHEA:21732"/>
        <dbReference type="ChEBI" id="CHEBI:15361"/>
        <dbReference type="ChEBI" id="CHEBI:15378"/>
        <dbReference type="ChEBI" id="CHEBI:16567"/>
        <dbReference type="ChEBI" id="CHEBI:29748"/>
        <dbReference type="ChEBI" id="CHEBI:29985"/>
        <dbReference type="ChEBI" id="CHEBI:58359"/>
        <dbReference type="EC" id="4.1.3.27"/>
    </reaction>
</comment>
<comment type="cofactor">
    <cofactor evidence="2">
        <name>Mg(2+)</name>
        <dbReference type="ChEBI" id="CHEBI:18420"/>
    </cofactor>
    <text evidence="2">Binds 1 Mg(2+) ion per subunit.</text>
</comment>
<comment type="activity regulation">
    <text evidence="1">Feedback inhibited by tryptophan.</text>
</comment>
<comment type="pathway">
    <text>Amino-acid biosynthesis; L-tryptophan biosynthesis; L-tryptophan from chorismate: step 1/5.</text>
</comment>
<comment type="subunit">
    <text evidence="1">Heterotetramer consisting of two non-identical subunits: a beta subunit (TrpG) and a large alpha subunit (TrpE).</text>
</comment>
<comment type="similarity">
    <text evidence="3">Belongs to the anthranilate synthase component I family.</text>
</comment>